<gene>
    <name evidence="3" type="ordered locus">YER145C-A</name>
</gene>
<sequence length="145" mass="16018">MAILLPLKSILPWCCITFSFLLSSSGSISHSTASSSITLTKSSKPTNVPSNSRFDCSTINTFWLIVLSMTSKGKISGRLILRASVYACECTCIRYACCETIYPPRKPFSLSLYFFYFNKKASILFCYPDAKTKPEHPGNKRAGSG</sequence>
<keyword id="KW-1185">Reference proteome</keyword>
<keyword id="KW-0732">Signal</keyword>
<reference key="1">
    <citation type="journal article" date="1997" name="Nature">
        <title>The nucleotide sequence of Saccharomyces cerevisiae chromosome V.</title>
        <authorList>
            <person name="Dietrich F.S."/>
            <person name="Mulligan J.T."/>
            <person name="Hennessy K.M."/>
            <person name="Yelton M.A."/>
            <person name="Allen E."/>
            <person name="Araujo R."/>
            <person name="Aviles E."/>
            <person name="Berno A."/>
            <person name="Brennan T."/>
            <person name="Carpenter J."/>
            <person name="Chen E."/>
            <person name="Cherry J.M."/>
            <person name="Chung E."/>
            <person name="Duncan M."/>
            <person name="Guzman E."/>
            <person name="Hartzell G."/>
            <person name="Hunicke-Smith S."/>
            <person name="Hyman R.W."/>
            <person name="Kayser A."/>
            <person name="Komp C."/>
            <person name="Lashkari D."/>
            <person name="Lew H."/>
            <person name="Lin D."/>
            <person name="Mosedale D."/>
            <person name="Nakahara K."/>
            <person name="Namath A."/>
            <person name="Norgren R."/>
            <person name="Oefner P."/>
            <person name="Oh C."/>
            <person name="Petel F.X."/>
            <person name="Roberts D."/>
            <person name="Sehl P."/>
            <person name="Schramm S."/>
            <person name="Shogren T."/>
            <person name="Smith V."/>
            <person name="Taylor P."/>
            <person name="Wei Y."/>
            <person name="Botstein D."/>
            <person name="Davis R.W."/>
        </authorList>
    </citation>
    <scope>NUCLEOTIDE SEQUENCE [LARGE SCALE GENOMIC DNA]</scope>
    <source>
        <strain>ATCC 204508 / S288c</strain>
    </source>
</reference>
<reference key="2">
    <citation type="journal article" date="2014" name="G3 (Bethesda)">
        <title>The reference genome sequence of Saccharomyces cerevisiae: Then and now.</title>
        <authorList>
            <person name="Engel S.R."/>
            <person name="Dietrich F.S."/>
            <person name="Fisk D.G."/>
            <person name="Binkley G."/>
            <person name="Balakrishnan R."/>
            <person name="Costanzo M.C."/>
            <person name="Dwight S.S."/>
            <person name="Hitz B.C."/>
            <person name="Karra K."/>
            <person name="Nash R.S."/>
            <person name="Weng S."/>
            <person name="Wong E.D."/>
            <person name="Lloyd P."/>
            <person name="Skrzypek M.S."/>
            <person name="Miyasato S.R."/>
            <person name="Simison M."/>
            <person name="Cherry J.M."/>
        </authorList>
    </citation>
    <scope>GENOME REANNOTATION</scope>
    <source>
        <strain>ATCC 204508 / S288c</strain>
    </source>
</reference>
<evidence type="ECO:0000255" key="1"/>
<evidence type="ECO:0000305" key="2"/>
<evidence type="ECO:0000312" key="3">
    <source>
        <dbReference type="SGD" id="S000028758"/>
    </source>
</evidence>
<name>YE145_YEAST</name>
<organism>
    <name type="scientific">Saccharomyces cerevisiae (strain ATCC 204508 / S288c)</name>
    <name type="common">Baker's yeast</name>
    <dbReference type="NCBI Taxonomy" id="559292"/>
    <lineage>
        <taxon>Eukaryota</taxon>
        <taxon>Fungi</taxon>
        <taxon>Dikarya</taxon>
        <taxon>Ascomycota</taxon>
        <taxon>Saccharomycotina</taxon>
        <taxon>Saccharomycetes</taxon>
        <taxon>Saccharomycetales</taxon>
        <taxon>Saccharomycetaceae</taxon>
        <taxon>Saccharomyces</taxon>
    </lineage>
</organism>
<accession>A0A023PYF4</accession>
<accession>A0A1S0T072</accession>
<proteinExistence type="inferred from homology"/>
<dbReference type="EMBL" id="KJ412240">
    <property type="protein sequence ID" value="AHX39283.1"/>
    <property type="molecule type" value="Genomic_DNA"/>
</dbReference>
<dbReference type="EMBL" id="BK006939">
    <property type="protein sequence ID" value="DAA80289.1"/>
    <property type="molecule type" value="Genomic_DNA"/>
</dbReference>
<dbReference type="RefSeq" id="NP_001335769.1">
    <property type="nucleotide sequence ID" value="NM_001348827.1"/>
</dbReference>
<dbReference type="FunCoup" id="A0A023PYF4">
    <property type="interactions" value="10"/>
</dbReference>
<dbReference type="PaxDb" id="4932-YER145C-A"/>
<dbReference type="PeptideAtlas" id="A0A023PYF4"/>
<dbReference type="EnsemblFungi" id="YER145C-A_mRNA">
    <property type="protein sequence ID" value="YER145C-A"/>
    <property type="gene ID" value="YER145C-A"/>
</dbReference>
<dbReference type="GeneID" id="31009439"/>
<dbReference type="AGR" id="SGD:S000028758"/>
<dbReference type="SGD" id="S000028758">
    <property type="gene designation" value="YER145C-A"/>
</dbReference>
<dbReference type="HOGENOM" id="CLU_1620354_0_0_1"/>
<dbReference type="InParanoid" id="A0A023PYF4"/>
<dbReference type="OMA" id="YACCETI"/>
<dbReference type="OrthoDB" id="4059924at2759"/>
<dbReference type="PRO" id="PR:A0A023PYF4"/>
<dbReference type="Proteomes" id="UP000002311">
    <property type="component" value="Chromosome V"/>
</dbReference>
<dbReference type="RNAct" id="A0A023PYF4">
    <property type="molecule type" value="protein"/>
</dbReference>
<feature type="signal peptide" evidence="1">
    <location>
        <begin position="1"/>
        <end position="26"/>
    </location>
</feature>
<feature type="chain" id="PRO_0000431001" description="Uncharacterized protein YER145C-A">
    <location>
        <begin position="27"/>
        <end position="145"/>
    </location>
</feature>
<protein>
    <recommendedName>
        <fullName evidence="2">Uncharacterized protein YER145C-A</fullName>
    </recommendedName>
</protein>